<sequence length="386" mass="42315">MSALEKSMHLGRLPSRPPLPGSGGSQSGAKMRMGPGRKRDFSPVPWSQYFESMEDVEVENETGKDTFRVYKSGSEGPVLLLLHGGGHSALSWAVFTAAIISRVQCRIVALDLRSHGETKVKNPEDLSAETMAKDVGNVVEAMYGDLPPPIMLIGHSMGGAIAVHTASSNLVPSLLGLCMIDVVEGTAMDALNSMQNFLRGRPKTFKSLENAIEWSVKSGQIRNLESARVSMVGQVKQCEGITSPEGSKSIVEGIIEEEEEDEEGSESISKRKKEDDMETKKDHPYTWRIELAKTEKYWDGWFRGLSNLFLSCPIPKLLLLAGVDRLDKDLTIGQMQGKFQMQVLPQCGHAVHEDAPDKVAEAVATFLIRHRFAEPIGGFQCVFPGC</sequence>
<protein>
    <recommendedName>
        <fullName>Protein phosphatase methylesterase 1</fullName>
        <shortName>PME-1</shortName>
        <ecNumber>3.1.1.89</ecNumber>
    </recommendedName>
</protein>
<organism>
    <name type="scientific">Homo sapiens</name>
    <name type="common">Human</name>
    <dbReference type="NCBI Taxonomy" id="9606"/>
    <lineage>
        <taxon>Eukaryota</taxon>
        <taxon>Metazoa</taxon>
        <taxon>Chordata</taxon>
        <taxon>Craniata</taxon>
        <taxon>Vertebrata</taxon>
        <taxon>Euteleostomi</taxon>
        <taxon>Mammalia</taxon>
        <taxon>Eutheria</taxon>
        <taxon>Euarchontoglires</taxon>
        <taxon>Primates</taxon>
        <taxon>Haplorrhini</taxon>
        <taxon>Catarrhini</taxon>
        <taxon>Hominidae</taxon>
        <taxon>Homo</taxon>
    </lineage>
</organism>
<gene>
    <name type="primary">PPME1</name>
    <name type="synonym">PME1</name>
    <name type="ORF">PP2593</name>
    <name type="ORF">PRO0750</name>
</gene>
<accession>Q9Y570</accession>
<accession>B3KMU6</accession>
<accession>B5MEE7</accession>
<accession>J3QT22</accession>
<accession>Q8WYG8</accession>
<accession>Q9NVT5</accession>
<accession>Q9UI18</accession>
<evidence type="ECO:0000250" key="1"/>
<evidence type="ECO:0000250" key="2">
    <source>
        <dbReference type="UniProtKB" id="Q8BVQ5"/>
    </source>
</evidence>
<evidence type="ECO:0000256" key="3">
    <source>
        <dbReference type="SAM" id="MobiDB-lite"/>
    </source>
</evidence>
<evidence type="ECO:0000269" key="4">
    <source>
    </source>
</evidence>
<evidence type="ECO:0000269" key="5">
    <source>
    </source>
</evidence>
<evidence type="ECO:0000269" key="6">
    <source>
    </source>
</evidence>
<evidence type="ECO:0000303" key="7">
    <source>
    </source>
</evidence>
<evidence type="ECO:0000303" key="8">
    <source ref="2"/>
</evidence>
<evidence type="ECO:0000305" key="9"/>
<evidence type="ECO:0007744" key="10">
    <source>
    </source>
</evidence>
<evidence type="ECO:0007744" key="11">
    <source>
    </source>
</evidence>
<evidence type="ECO:0007744" key="12">
    <source>
    </source>
</evidence>
<evidence type="ECO:0007744" key="13">
    <source>
    </source>
</evidence>
<evidence type="ECO:0007829" key="14">
    <source>
        <dbReference type="PDB" id="3C5V"/>
    </source>
</evidence>
<evidence type="ECO:0007829" key="15">
    <source>
        <dbReference type="PDB" id="3C5W"/>
    </source>
</evidence>
<evidence type="ECO:0007829" key="16">
    <source>
        <dbReference type="PDB" id="7SOY"/>
    </source>
</evidence>
<comment type="function">
    <text evidence="4">Demethylates proteins that have been reversibly carboxymethylated. Demethylates PPP2CB (in vitro) and PPP2CA. Binding to PPP2CA displaces the manganese ion and inactivates the enzyme.</text>
</comment>
<comment type="catalytic activity">
    <reaction evidence="4 6">
        <text>[phosphatase 2A protein]-C-terminal L-leucine methyl ester + H2O = [phosphatase 2A protein]-C-terminal L-leucine + methanol + H(+)</text>
        <dbReference type="Rhea" id="RHEA:48548"/>
        <dbReference type="Rhea" id="RHEA-COMP:12134"/>
        <dbReference type="Rhea" id="RHEA-COMP:12135"/>
        <dbReference type="ChEBI" id="CHEBI:15377"/>
        <dbReference type="ChEBI" id="CHEBI:15378"/>
        <dbReference type="ChEBI" id="CHEBI:17790"/>
        <dbReference type="ChEBI" id="CHEBI:90516"/>
        <dbReference type="ChEBI" id="CHEBI:90517"/>
        <dbReference type="EC" id="3.1.1.89"/>
    </reaction>
</comment>
<comment type="subunit">
    <text evidence="6">Binds PPP2CA and PPP2CB.</text>
</comment>
<comment type="interaction">
    <interactant intactId="EBI-1772895">
        <id>Q9Y570</id>
    </interactant>
    <interactant intactId="EBI-16765970">
        <id>P67775-1</id>
        <label>PPP2CA</label>
    </interactant>
    <organismsDiffer>false</organismsDiffer>
    <experiments>2</experiments>
</comment>
<comment type="interaction">
    <interactant intactId="EBI-1772895">
        <id>Q9Y570</id>
    </interactant>
    <interactant intactId="EBI-1050019">
        <id>Q08188</id>
        <label>TGM3</label>
    </interactant>
    <organismsDiffer>false</organismsDiffer>
    <experiments>2</experiments>
</comment>
<comment type="alternative products">
    <event type="alternative splicing"/>
    <isoform>
        <id>Q9Y570-1</id>
        <name>1</name>
        <sequence type="displayed"/>
    </isoform>
    <isoform>
        <id>Q9Y570-2</id>
        <name>2</name>
        <sequence type="described" ref="VSP_010336"/>
    </isoform>
    <isoform>
        <id>Q9Y570-3</id>
        <name>3</name>
        <sequence type="described" ref="VSP_010335 VSP_010337"/>
    </isoform>
    <isoform>
        <id>Q9Y570-4</id>
        <name>4</name>
        <sequence type="described" ref="VSP_054818"/>
    </isoform>
</comment>
<comment type="PTM">
    <text evidence="1">Phosphorylated by SIK1 following increases in intracellular sodium, leading to dissociation from the protein phosphatase 2A (PP2A) complex and subsequent dephosphorylation of sodium/potassium-transporting ATPase ATP1A1.</text>
</comment>
<comment type="similarity">
    <text evidence="9">Belongs to the AB hydrolase superfamily.</text>
</comment>
<comment type="sequence caution" evidence="9">
    <conflict type="erroneous translation">
        <sequence resource="EMBL-CDS" id="AAG22477"/>
    </conflict>
    <text>Wrong choice of CDS.</text>
</comment>
<keyword id="KW-0002">3D-structure</keyword>
<keyword id="KW-0025">Alternative splicing</keyword>
<keyword id="KW-0903">Direct protein sequencing</keyword>
<keyword id="KW-0378">Hydrolase</keyword>
<keyword id="KW-0488">Methylation</keyword>
<keyword id="KW-0597">Phosphoprotein</keyword>
<keyword id="KW-1267">Proteomics identification</keyword>
<keyword id="KW-1185">Reference proteome</keyword>
<keyword id="KW-0719">Serine esterase</keyword>
<reference key="1">
    <citation type="journal article" date="1999" name="J. Biol. Chem.">
        <title>A protein phosphatase methylesterase (PME-1) is one of several novel proteins stably associating with two inactive mutants of protein phosphatase 2A.</title>
        <authorList>
            <person name="Ogris E."/>
            <person name="Du X."/>
            <person name="Nelson K.C."/>
            <person name="Mak E.K."/>
            <person name="Yu X.X."/>
            <person name="Lane W.S."/>
            <person name="Pallas D.C."/>
        </authorList>
    </citation>
    <scope>NUCLEOTIDE SEQUENCE [MRNA] (ISOFORM 1)</scope>
    <scope>FUNCTION</scope>
    <scope>CATALYTIC ACTIVITY</scope>
    <scope>INTERACTION WITH PPP2CB</scope>
    <source>
        <tissue>Cervix carcinoma</tissue>
    </source>
</reference>
<reference key="2">
    <citation type="submission" date="1998-12" db="EMBL/GenBank/DDBJ databases">
        <title>Functional prediction of the coding sequences of 9 new genes deduced by analysis of cDNA clones from human fetal liver.</title>
        <authorList>
            <person name="Zhang C."/>
            <person name="Yu Y."/>
            <person name="Zhang S."/>
            <person name="Ouyang S."/>
            <person name="Luo L."/>
            <person name="Wei H."/>
            <person name="Zhou G."/>
            <person name="Zhang Y."/>
            <person name="Liu M."/>
            <person name="He F."/>
        </authorList>
    </citation>
    <scope>NUCLEOTIDE SEQUENCE [LARGE SCALE MRNA] (ISOFORM 2)</scope>
    <source>
        <tissue>Fetal liver</tissue>
    </source>
</reference>
<reference key="3">
    <citation type="journal article" date="2004" name="Nat. Genet.">
        <title>Complete sequencing and characterization of 21,243 full-length human cDNAs.</title>
        <authorList>
            <person name="Ota T."/>
            <person name="Suzuki Y."/>
            <person name="Nishikawa T."/>
            <person name="Otsuki T."/>
            <person name="Sugiyama T."/>
            <person name="Irie R."/>
            <person name="Wakamatsu A."/>
            <person name="Hayashi K."/>
            <person name="Sato H."/>
            <person name="Nagai K."/>
            <person name="Kimura K."/>
            <person name="Makita H."/>
            <person name="Sekine M."/>
            <person name="Obayashi M."/>
            <person name="Nishi T."/>
            <person name="Shibahara T."/>
            <person name="Tanaka T."/>
            <person name="Ishii S."/>
            <person name="Yamamoto J."/>
            <person name="Saito K."/>
            <person name="Kawai Y."/>
            <person name="Isono Y."/>
            <person name="Nakamura Y."/>
            <person name="Nagahari K."/>
            <person name="Murakami K."/>
            <person name="Yasuda T."/>
            <person name="Iwayanagi T."/>
            <person name="Wagatsuma M."/>
            <person name="Shiratori A."/>
            <person name="Sudo H."/>
            <person name="Hosoiri T."/>
            <person name="Kaku Y."/>
            <person name="Kodaira H."/>
            <person name="Kondo H."/>
            <person name="Sugawara M."/>
            <person name="Takahashi M."/>
            <person name="Kanda K."/>
            <person name="Yokoi T."/>
            <person name="Furuya T."/>
            <person name="Kikkawa E."/>
            <person name="Omura Y."/>
            <person name="Abe K."/>
            <person name="Kamihara K."/>
            <person name="Katsuta N."/>
            <person name="Sato K."/>
            <person name="Tanikawa M."/>
            <person name="Yamazaki M."/>
            <person name="Ninomiya K."/>
            <person name="Ishibashi T."/>
            <person name="Yamashita H."/>
            <person name="Murakawa K."/>
            <person name="Fujimori K."/>
            <person name="Tanai H."/>
            <person name="Kimata M."/>
            <person name="Watanabe M."/>
            <person name="Hiraoka S."/>
            <person name="Chiba Y."/>
            <person name="Ishida S."/>
            <person name="Ono Y."/>
            <person name="Takiguchi S."/>
            <person name="Watanabe S."/>
            <person name="Yosida M."/>
            <person name="Hotuta T."/>
            <person name="Kusano J."/>
            <person name="Kanehori K."/>
            <person name="Takahashi-Fujii A."/>
            <person name="Hara H."/>
            <person name="Tanase T.-O."/>
            <person name="Nomura Y."/>
            <person name="Togiya S."/>
            <person name="Komai F."/>
            <person name="Hara R."/>
            <person name="Takeuchi K."/>
            <person name="Arita M."/>
            <person name="Imose N."/>
            <person name="Musashino K."/>
            <person name="Yuuki H."/>
            <person name="Oshima A."/>
            <person name="Sasaki N."/>
            <person name="Aotsuka S."/>
            <person name="Yoshikawa Y."/>
            <person name="Matsunawa H."/>
            <person name="Ichihara T."/>
            <person name="Shiohata N."/>
            <person name="Sano S."/>
            <person name="Moriya S."/>
            <person name="Momiyama H."/>
            <person name="Satoh N."/>
            <person name="Takami S."/>
            <person name="Terashima Y."/>
            <person name="Suzuki O."/>
            <person name="Nakagawa S."/>
            <person name="Senoh A."/>
            <person name="Mizoguchi H."/>
            <person name="Goto Y."/>
            <person name="Shimizu F."/>
            <person name="Wakebe H."/>
            <person name="Hishigaki H."/>
            <person name="Watanabe T."/>
            <person name="Sugiyama A."/>
            <person name="Takemoto M."/>
            <person name="Kawakami B."/>
            <person name="Yamazaki M."/>
            <person name="Watanabe K."/>
            <person name="Kumagai A."/>
            <person name="Itakura S."/>
            <person name="Fukuzumi Y."/>
            <person name="Fujimori Y."/>
            <person name="Komiyama M."/>
            <person name="Tashiro H."/>
            <person name="Tanigami A."/>
            <person name="Fujiwara T."/>
            <person name="Ono T."/>
            <person name="Yamada K."/>
            <person name="Fujii Y."/>
            <person name="Ozaki K."/>
            <person name="Hirao M."/>
            <person name="Ohmori Y."/>
            <person name="Kawabata A."/>
            <person name="Hikiji T."/>
            <person name="Kobatake N."/>
            <person name="Inagaki H."/>
            <person name="Ikema Y."/>
            <person name="Okamoto S."/>
            <person name="Okitani R."/>
            <person name="Kawakami T."/>
            <person name="Noguchi S."/>
            <person name="Itoh T."/>
            <person name="Shigeta K."/>
            <person name="Senba T."/>
            <person name="Matsumura K."/>
            <person name="Nakajima Y."/>
            <person name="Mizuno T."/>
            <person name="Morinaga M."/>
            <person name="Sasaki M."/>
            <person name="Togashi T."/>
            <person name="Oyama M."/>
            <person name="Hata H."/>
            <person name="Watanabe M."/>
            <person name="Komatsu T."/>
            <person name="Mizushima-Sugano J."/>
            <person name="Satoh T."/>
            <person name="Shirai Y."/>
            <person name="Takahashi Y."/>
            <person name="Nakagawa K."/>
            <person name="Okumura K."/>
            <person name="Nagase T."/>
            <person name="Nomura N."/>
            <person name="Kikuchi H."/>
            <person name="Masuho Y."/>
            <person name="Yamashita R."/>
            <person name="Nakai K."/>
            <person name="Yada T."/>
            <person name="Nakamura Y."/>
            <person name="Ohara O."/>
            <person name="Isogai T."/>
            <person name="Sugano S."/>
        </authorList>
    </citation>
    <scope>NUCLEOTIDE SEQUENCE [LARGE SCALE MRNA] (ISOFORMS 1 AND 3)</scope>
    <source>
        <tissue>Amygdala</tissue>
    </source>
</reference>
<reference key="4">
    <citation type="journal article" date="2006" name="Nature">
        <title>Human chromosome 11 DNA sequence and analysis including novel gene identification.</title>
        <authorList>
            <person name="Taylor T.D."/>
            <person name="Noguchi H."/>
            <person name="Totoki Y."/>
            <person name="Toyoda A."/>
            <person name="Kuroki Y."/>
            <person name="Dewar K."/>
            <person name="Lloyd C."/>
            <person name="Itoh T."/>
            <person name="Takeda T."/>
            <person name="Kim D.-W."/>
            <person name="She X."/>
            <person name="Barlow K.F."/>
            <person name="Bloom T."/>
            <person name="Bruford E."/>
            <person name="Chang J.L."/>
            <person name="Cuomo C.A."/>
            <person name="Eichler E."/>
            <person name="FitzGerald M.G."/>
            <person name="Jaffe D.B."/>
            <person name="LaButti K."/>
            <person name="Nicol R."/>
            <person name="Park H.-S."/>
            <person name="Seaman C."/>
            <person name="Sougnez C."/>
            <person name="Yang X."/>
            <person name="Zimmer A.R."/>
            <person name="Zody M.C."/>
            <person name="Birren B.W."/>
            <person name="Nusbaum C."/>
            <person name="Fujiyama A."/>
            <person name="Hattori M."/>
            <person name="Rogers J."/>
            <person name="Lander E.S."/>
            <person name="Sakaki Y."/>
        </authorList>
    </citation>
    <scope>NUCLEOTIDE SEQUENCE [LARGE SCALE GENOMIC DNA]</scope>
</reference>
<reference key="5">
    <citation type="submission" date="2005-07" db="EMBL/GenBank/DDBJ databases">
        <authorList>
            <person name="Mural R.J."/>
            <person name="Istrail S."/>
            <person name="Sutton G.G."/>
            <person name="Florea L."/>
            <person name="Halpern A.L."/>
            <person name="Mobarry C.M."/>
            <person name="Lippert R."/>
            <person name="Walenz B."/>
            <person name="Shatkay H."/>
            <person name="Dew I."/>
            <person name="Miller J.R."/>
            <person name="Flanigan M.J."/>
            <person name="Edwards N.J."/>
            <person name="Bolanos R."/>
            <person name="Fasulo D."/>
            <person name="Halldorsson B.V."/>
            <person name="Hannenhalli S."/>
            <person name="Turner R."/>
            <person name="Yooseph S."/>
            <person name="Lu F."/>
            <person name="Nusskern D.R."/>
            <person name="Shue B.C."/>
            <person name="Zheng X.H."/>
            <person name="Zhong F."/>
            <person name="Delcher A.L."/>
            <person name="Huson D.H."/>
            <person name="Kravitz S.A."/>
            <person name="Mouchard L."/>
            <person name="Reinert K."/>
            <person name="Remington K.A."/>
            <person name="Clark A.G."/>
            <person name="Waterman M.S."/>
            <person name="Eichler E.E."/>
            <person name="Adams M.D."/>
            <person name="Hunkapiller M.W."/>
            <person name="Myers E.W."/>
            <person name="Venter J.C."/>
        </authorList>
    </citation>
    <scope>NUCLEOTIDE SEQUENCE [LARGE SCALE GENOMIC DNA]</scope>
</reference>
<reference key="6">
    <citation type="journal article" date="2004" name="Genome Res.">
        <title>The status, quality, and expansion of the NIH full-length cDNA project: the Mammalian Gene Collection (MGC).</title>
        <authorList>
            <consortium name="The MGC Project Team"/>
        </authorList>
    </citation>
    <scope>NUCLEOTIDE SEQUENCE [LARGE SCALE MRNA] (ISOFORM 1)</scope>
    <source>
        <tissue>Lung</tissue>
        <tissue>Skin</tissue>
    </source>
</reference>
<reference key="7">
    <citation type="journal article" date="2003" name="Nat. Biotechnol.">
        <title>Exploring proteomes and analyzing protein processing by mass spectrometric identification of sorted N-terminal peptides.</title>
        <authorList>
            <person name="Gevaert K."/>
            <person name="Goethals M."/>
            <person name="Martens L."/>
            <person name="Van Damme J."/>
            <person name="Staes A."/>
            <person name="Thomas G.R."/>
            <person name="Vandekerckhove J."/>
        </authorList>
    </citation>
    <scope>PROTEIN SEQUENCE OF 2-12</scope>
    <source>
        <tissue>Platelet</tissue>
    </source>
</reference>
<reference key="8">
    <citation type="journal article" date="2004" name="Proc. Natl. Acad. Sci. U.S.A.">
        <title>Large-scale cDNA transfection screening for genes related to cancer development and progression.</title>
        <authorList>
            <person name="Wan D."/>
            <person name="Gong Y."/>
            <person name="Qin W."/>
            <person name="Zhang P."/>
            <person name="Li J."/>
            <person name="Wei L."/>
            <person name="Zhou X."/>
            <person name="Li H."/>
            <person name="Qiu X."/>
            <person name="Zhong F."/>
            <person name="He L."/>
            <person name="Yu J."/>
            <person name="Yao G."/>
            <person name="Jiang H."/>
            <person name="Qian L."/>
            <person name="Yu Y."/>
            <person name="Shu H."/>
            <person name="Chen X."/>
            <person name="Xu H."/>
            <person name="Guo M."/>
            <person name="Pan Z."/>
            <person name="Chen Y."/>
            <person name="Ge C."/>
            <person name="Yang S."/>
            <person name="Gu J."/>
        </authorList>
    </citation>
    <scope>NUCLEOTIDE SEQUENCE [LARGE SCALE MRNA] OF 257-386 (ISOFORM 1)</scope>
</reference>
<reference key="9">
    <citation type="journal article" date="2008" name="Proc. Natl. Acad. Sci. U.S.A.">
        <title>A quantitative atlas of mitotic phosphorylation.</title>
        <authorList>
            <person name="Dephoure N."/>
            <person name="Zhou C."/>
            <person name="Villen J."/>
            <person name="Beausoleil S.A."/>
            <person name="Bakalarski C.E."/>
            <person name="Elledge S.J."/>
            <person name="Gygi S.P."/>
        </authorList>
    </citation>
    <scope>IDENTIFICATION BY MASS SPECTROMETRY [LARGE SCALE ANALYSIS]</scope>
    <source>
        <tissue>Cervix carcinoma</tissue>
    </source>
</reference>
<reference key="10">
    <citation type="journal article" date="2009" name="Sci. Signal.">
        <title>Quantitative phosphoproteomic analysis of T cell receptor signaling reveals system-wide modulation of protein-protein interactions.</title>
        <authorList>
            <person name="Mayya V."/>
            <person name="Lundgren D.H."/>
            <person name="Hwang S.-I."/>
            <person name="Rezaul K."/>
            <person name="Wu L."/>
            <person name="Eng J.K."/>
            <person name="Rodionov V."/>
            <person name="Han D.K."/>
        </authorList>
    </citation>
    <scope>PHOSPHORYLATION [LARGE SCALE ANALYSIS] AT SER-42</scope>
    <scope>IDENTIFICATION BY MASS SPECTROMETRY [LARGE SCALE ANALYSIS]</scope>
    <source>
        <tissue>Leukemic T-cell</tissue>
    </source>
</reference>
<reference key="11">
    <citation type="journal article" date="2010" name="Sci. Signal.">
        <title>Quantitative phosphoproteomics reveals widespread full phosphorylation site occupancy during mitosis.</title>
        <authorList>
            <person name="Olsen J.V."/>
            <person name="Vermeulen M."/>
            <person name="Santamaria A."/>
            <person name="Kumar C."/>
            <person name="Miller M.L."/>
            <person name="Jensen L.J."/>
            <person name="Gnad F."/>
            <person name="Cox J."/>
            <person name="Jensen T.S."/>
            <person name="Nigg E.A."/>
            <person name="Brunak S."/>
            <person name="Mann M."/>
        </authorList>
    </citation>
    <scope>IDENTIFICATION BY MASS SPECTROMETRY [LARGE SCALE ANALYSIS]</scope>
    <source>
        <tissue>Cervix carcinoma</tissue>
    </source>
</reference>
<reference key="12">
    <citation type="journal article" date="2011" name="BMC Syst. Biol.">
        <title>Initial characterization of the human central proteome.</title>
        <authorList>
            <person name="Burkard T.R."/>
            <person name="Planyavsky M."/>
            <person name="Kaupe I."/>
            <person name="Breitwieser F.P."/>
            <person name="Buerckstuemmer T."/>
            <person name="Bennett K.L."/>
            <person name="Superti-Furga G."/>
            <person name="Colinge J."/>
        </authorList>
    </citation>
    <scope>IDENTIFICATION BY MASS SPECTROMETRY [LARGE SCALE ANALYSIS]</scope>
</reference>
<reference key="13">
    <citation type="journal article" date="2011" name="Sci. Signal.">
        <title>System-wide temporal characterization of the proteome and phosphoproteome of human embryonic stem cell differentiation.</title>
        <authorList>
            <person name="Rigbolt K.T."/>
            <person name="Prokhorova T.A."/>
            <person name="Akimov V."/>
            <person name="Henningsen J."/>
            <person name="Johansen P.T."/>
            <person name="Kratchmarova I."/>
            <person name="Kassem M."/>
            <person name="Mann M."/>
            <person name="Olsen J.V."/>
            <person name="Blagoev B."/>
        </authorList>
    </citation>
    <scope>IDENTIFICATION BY MASS SPECTROMETRY [LARGE SCALE ANALYSIS]</scope>
</reference>
<reference key="14">
    <citation type="journal article" date="2013" name="J. Proteome Res.">
        <title>Toward a comprehensive characterization of a human cancer cell phosphoproteome.</title>
        <authorList>
            <person name="Zhou H."/>
            <person name="Di Palma S."/>
            <person name="Preisinger C."/>
            <person name="Peng M."/>
            <person name="Polat A.N."/>
            <person name="Heck A.J."/>
            <person name="Mohammed S."/>
        </authorList>
    </citation>
    <scope>PHOSPHORYLATION [LARGE SCALE ANALYSIS] AT SER-15</scope>
    <scope>IDENTIFICATION BY MASS SPECTROMETRY [LARGE SCALE ANALYSIS]</scope>
    <source>
        <tissue>Cervix carcinoma</tissue>
        <tissue>Erythroleukemia</tissue>
    </source>
</reference>
<reference key="15">
    <citation type="journal article" date="2014" name="J. Proteomics">
        <title>An enzyme assisted RP-RPLC approach for in-depth analysis of human liver phosphoproteome.</title>
        <authorList>
            <person name="Bian Y."/>
            <person name="Song C."/>
            <person name="Cheng K."/>
            <person name="Dong M."/>
            <person name="Wang F."/>
            <person name="Huang J."/>
            <person name="Sun D."/>
            <person name="Wang L."/>
            <person name="Ye M."/>
            <person name="Zou H."/>
        </authorList>
    </citation>
    <scope>PHOSPHORYLATION [LARGE SCALE ANALYSIS] AT SER-42</scope>
    <scope>IDENTIFICATION BY MASS SPECTROMETRY [LARGE SCALE ANALYSIS]</scope>
    <source>
        <tissue>Liver</tissue>
    </source>
</reference>
<reference key="16">
    <citation type="journal article" date="2014" name="Mol. Cell. Proteomics">
        <title>Immunoaffinity enrichment and mass spectrometry analysis of protein methylation.</title>
        <authorList>
            <person name="Guo A."/>
            <person name="Gu H."/>
            <person name="Zhou J."/>
            <person name="Mulhern D."/>
            <person name="Wang Y."/>
            <person name="Lee K.A."/>
            <person name="Yang V."/>
            <person name="Aguiar M."/>
            <person name="Kornhauser J."/>
            <person name="Jia X."/>
            <person name="Ren J."/>
            <person name="Beausoleil S.A."/>
            <person name="Silva J.C."/>
            <person name="Vemulapalli V."/>
            <person name="Bedford M.T."/>
            <person name="Comb M.J."/>
        </authorList>
    </citation>
    <scope>METHYLATION [LARGE SCALE ANALYSIS] AT ARG-16</scope>
    <scope>IDENTIFICATION BY MASS SPECTROMETRY [LARGE SCALE ANALYSIS]</scope>
    <source>
        <tissue>Colon carcinoma</tissue>
    </source>
</reference>
<reference key="17">
    <citation type="journal article" date="2008" name="Cell">
        <title>Structural mechanism of demethylation and inactivation of protein phosphatase 2A.</title>
        <authorList>
            <person name="Xing Y."/>
            <person name="Li Z."/>
            <person name="Chen Y."/>
            <person name="Stock J.B."/>
            <person name="Jeffrey P.D."/>
            <person name="Shi Y."/>
        </authorList>
    </citation>
    <scope>X-RAY CRYSTALLOGRAPHY (2.0 ANGSTROMS) OF 39-386 ALONE AND IN COMPLEX WITH PPP2CA AND PPP2R1A</scope>
    <scope>ACTIVE SITE</scope>
    <scope>CATALYTIC ACTIVITY</scope>
</reference>
<dbReference type="EC" id="3.1.1.89"/>
<dbReference type="EMBL" id="AF157028">
    <property type="protein sequence ID" value="AAD44976.1"/>
    <property type="molecule type" value="mRNA"/>
</dbReference>
<dbReference type="EMBL" id="AF111853">
    <property type="protein sequence ID" value="AAF16692.1"/>
    <property type="molecule type" value="mRNA"/>
</dbReference>
<dbReference type="EMBL" id="AK001381">
    <property type="protein sequence ID" value="BAA91661.1"/>
    <property type="molecule type" value="mRNA"/>
</dbReference>
<dbReference type="EMBL" id="AK022725">
    <property type="protein sequence ID" value="BAG51108.1"/>
    <property type="molecule type" value="mRNA"/>
</dbReference>
<dbReference type="EMBL" id="AK123288">
    <property type="protein sequence ID" value="BAC85574.1"/>
    <property type="molecule type" value="mRNA"/>
</dbReference>
<dbReference type="EMBL" id="AP000577">
    <property type="status" value="NOT_ANNOTATED_CDS"/>
    <property type="molecule type" value="Genomic_DNA"/>
</dbReference>
<dbReference type="EMBL" id="AP002392">
    <property type="status" value="NOT_ANNOTATED_CDS"/>
    <property type="molecule type" value="Genomic_DNA"/>
</dbReference>
<dbReference type="EMBL" id="CH471076">
    <property type="protein sequence ID" value="EAW74932.1"/>
    <property type="molecule type" value="Genomic_DNA"/>
</dbReference>
<dbReference type="EMBL" id="BC003046">
    <property type="protein sequence ID" value="AAH03046.1"/>
    <property type="molecule type" value="mRNA"/>
</dbReference>
<dbReference type="EMBL" id="BC050705">
    <property type="protein sequence ID" value="AAH50705.1"/>
    <property type="molecule type" value="mRNA"/>
</dbReference>
<dbReference type="EMBL" id="AF193049">
    <property type="protein sequence ID" value="AAG22477.1"/>
    <property type="status" value="ALT_SEQ"/>
    <property type="molecule type" value="mRNA"/>
</dbReference>
<dbReference type="CCDS" id="CCDS44678.1">
    <molecule id="Q9Y570-1"/>
</dbReference>
<dbReference type="CCDS" id="CCDS60891.1">
    <molecule id="Q9Y570-4"/>
</dbReference>
<dbReference type="RefSeq" id="NP_001258522.1">
    <molecule id="Q9Y570-4"/>
    <property type="nucleotide sequence ID" value="NM_001271593.2"/>
</dbReference>
<dbReference type="RefSeq" id="NP_057231.1">
    <molecule id="Q9Y570-1"/>
    <property type="nucleotide sequence ID" value="NM_016147.3"/>
</dbReference>
<dbReference type="PDB" id="3C5V">
    <property type="method" value="X-ray"/>
    <property type="resolution" value="2.00 A"/>
    <property type="chains" value="A=39-386"/>
</dbReference>
<dbReference type="PDB" id="3C5W">
    <property type="method" value="X-ray"/>
    <property type="resolution" value="2.80 A"/>
    <property type="chains" value="P=284-386, P=39-238"/>
</dbReference>
<dbReference type="PDB" id="7SOY">
    <property type="method" value="EM"/>
    <property type="resolution" value="3.40 A"/>
    <property type="chains" value="P=1-386"/>
</dbReference>
<dbReference type="PDBsum" id="3C5V"/>
<dbReference type="PDBsum" id="3C5W"/>
<dbReference type="PDBsum" id="7SOY"/>
<dbReference type="EMDB" id="EMD-25363"/>
<dbReference type="SMR" id="Q9Y570"/>
<dbReference type="BioGRID" id="119524">
    <property type="interactions" value="180"/>
</dbReference>
<dbReference type="CORUM" id="Q9Y570"/>
<dbReference type="FunCoup" id="Q9Y570">
    <property type="interactions" value="3027"/>
</dbReference>
<dbReference type="IntAct" id="Q9Y570">
    <property type="interactions" value="61"/>
</dbReference>
<dbReference type="MINT" id="Q9Y570"/>
<dbReference type="STRING" id="9606.ENSP00000381461"/>
<dbReference type="BindingDB" id="Q9Y570"/>
<dbReference type="ChEMBL" id="CHEMBL1293320"/>
<dbReference type="GuidetoPHARMACOLOGY" id="2875"/>
<dbReference type="ESTHER" id="human-PPME1">
    <property type="family name" value="PPase_methylesterase_euk"/>
</dbReference>
<dbReference type="MEROPS" id="S33.984"/>
<dbReference type="GlyGen" id="Q9Y570">
    <property type="glycosylation" value="1 site, 1 O-linked glycan (1 site)"/>
</dbReference>
<dbReference type="iPTMnet" id="Q9Y570"/>
<dbReference type="MetOSite" id="Q9Y570"/>
<dbReference type="PhosphoSitePlus" id="Q9Y570"/>
<dbReference type="SwissPalm" id="Q9Y570"/>
<dbReference type="BioMuta" id="PPME1"/>
<dbReference type="DMDM" id="47606055"/>
<dbReference type="REPRODUCTION-2DPAGE" id="IPI00007694"/>
<dbReference type="jPOST" id="Q9Y570"/>
<dbReference type="MassIVE" id="Q9Y570"/>
<dbReference type="PaxDb" id="9606-ENSP00000381461"/>
<dbReference type="PeptideAtlas" id="Q9Y570"/>
<dbReference type="ProteomicsDB" id="86296">
    <molecule id="Q9Y570-1"/>
</dbReference>
<dbReference type="ProteomicsDB" id="86297">
    <molecule id="Q9Y570-2"/>
</dbReference>
<dbReference type="ProteomicsDB" id="86298">
    <molecule id="Q9Y570-3"/>
</dbReference>
<dbReference type="Pumba" id="Q9Y570"/>
<dbReference type="Antibodypedia" id="3870">
    <property type="antibodies" value="337 antibodies from 32 providers"/>
</dbReference>
<dbReference type="DNASU" id="51400"/>
<dbReference type="Ensembl" id="ENST00000328257.13">
    <molecule id="Q9Y570-1"/>
    <property type="protein sequence ID" value="ENSP00000329867.8"/>
    <property type="gene ID" value="ENSG00000214517.10"/>
</dbReference>
<dbReference type="Ensembl" id="ENST00000398427.6">
    <molecule id="Q9Y570-4"/>
    <property type="protein sequence ID" value="ENSP00000381461.4"/>
    <property type="gene ID" value="ENSG00000214517.10"/>
</dbReference>
<dbReference type="GeneID" id="51400"/>
<dbReference type="KEGG" id="hsa:51400"/>
<dbReference type="MANE-Select" id="ENST00000328257.13">
    <property type="protein sequence ID" value="ENSP00000329867.8"/>
    <property type="RefSeq nucleotide sequence ID" value="NM_016147.3"/>
    <property type="RefSeq protein sequence ID" value="NP_057231.1"/>
</dbReference>
<dbReference type="UCSC" id="uc001ouw.5">
    <molecule id="Q9Y570-1"/>
    <property type="organism name" value="human"/>
</dbReference>
<dbReference type="AGR" id="HGNC:30178"/>
<dbReference type="CTD" id="51400"/>
<dbReference type="DisGeNET" id="51400"/>
<dbReference type="GeneCards" id="PPME1"/>
<dbReference type="HGNC" id="HGNC:30178">
    <property type="gene designation" value="PPME1"/>
</dbReference>
<dbReference type="HPA" id="ENSG00000214517">
    <property type="expression patterns" value="Low tissue specificity"/>
</dbReference>
<dbReference type="MIM" id="611117">
    <property type="type" value="gene"/>
</dbReference>
<dbReference type="neXtProt" id="NX_Q9Y570"/>
<dbReference type="OpenTargets" id="ENSG00000214517"/>
<dbReference type="PharmGKB" id="PA142671152"/>
<dbReference type="VEuPathDB" id="HostDB:ENSG00000214517"/>
<dbReference type="eggNOG" id="KOG2564">
    <property type="taxonomic scope" value="Eukaryota"/>
</dbReference>
<dbReference type="GeneTree" id="ENSGT00390000004396"/>
<dbReference type="HOGENOM" id="CLU_024818_0_1_1"/>
<dbReference type="InParanoid" id="Q9Y570"/>
<dbReference type="OMA" id="VMVCHHG"/>
<dbReference type="OrthoDB" id="194865at2759"/>
<dbReference type="PAN-GO" id="Q9Y570">
    <property type="GO annotations" value="2 GO annotations based on evolutionary models"/>
</dbReference>
<dbReference type="PhylomeDB" id="Q9Y570"/>
<dbReference type="TreeFam" id="TF314697"/>
<dbReference type="BioCyc" id="MetaCyc:MONOMER-16514"/>
<dbReference type="BRENDA" id="3.1.1.89">
    <property type="organism ID" value="2681"/>
</dbReference>
<dbReference type="PathwayCommons" id="Q9Y570"/>
<dbReference type="Reactome" id="R-HSA-69273">
    <property type="pathway name" value="Cyclin A/B1/B2 associated events during G2/M transition"/>
</dbReference>
<dbReference type="SignaLink" id="Q9Y570"/>
<dbReference type="SIGNOR" id="Q9Y570"/>
<dbReference type="BioGRID-ORCS" id="51400">
    <property type="hits" value="178 hits in 1157 CRISPR screens"/>
</dbReference>
<dbReference type="CD-CODE" id="DEE660B4">
    <property type="entry name" value="Stress granule"/>
</dbReference>
<dbReference type="ChiTaRS" id="PPME1">
    <property type="organism name" value="human"/>
</dbReference>
<dbReference type="EvolutionaryTrace" id="Q9Y570"/>
<dbReference type="GenomeRNAi" id="51400"/>
<dbReference type="Pharos" id="Q9Y570">
    <property type="development level" value="Tchem"/>
</dbReference>
<dbReference type="PRO" id="PR:Q9Y570"/>
<dbReference type="Proteomes" id="UP000005640">
    <property type="component" value="Chromosome 11"/>
</dbReference>
<dbReference type="RNAct" id="Q9Y570">
    <property type="molecule type" value="protein"/>
</dbReference>
<dbReference type="Bgee" id="ENSG00000214517">
    <property type="expression patterns" value="Expressed in prefrontal cortex and 202 other cell types or tissues"/>
</dbReference>
<dbReference type="ExpressionAtlas" id="Q9Y570">
    <property type="expression patterns" value="baseline and differential"/>
</dbReference>
<dbReference type="GO" id="GO:0005654">
    <property type="term" value="C:nucleoplasm"/>
    <property type="evidence" value="ECO:0000304"/>
    <property type="project" value="Reactome"/>
</dbReference>
<dbReference type="GO" id="GO:0045296">
    <property type="term" value="F:cadherin binding"/>
    <property type="evidence" value="ECO:0007005"/>
    <property type="project" value="BHF-UCL"/>
</dbReference>
<dbReference type="GO" id="GO:0106222">
    <property type="term" value="F:lncRNA binding"/>
    <property type="evidence" value="ECO:0007669"/>
    <property type="project" value="Ensembl"/>
</dbReference>
<dbReference type="GO" id="GO:0051722">
    <property type="term" value="F:protein C-terminal methylesterase activity"/>
    <property type="evidence" value="ECO:0000314"/>
    <property type="project" value="HGNC-UCL"/>
</dbReference>
<dbReference type="GO" id="GO:0019901">
    <property type="term" value="F:protein kinase binding"/>
    <property type="evidence" value="ECO:0007669"/>
    <property type="project" value="Ensembl"/>
</dbReference>
<dbReference type="GO" id="GO:0051721">
    <property type="term" value="F:protein phosphatase 2A binding"/>
    <property type="evidence" value="ECO:0000314"/>
    <property type="project" value="HGNC-UCL"/>
</dbReference>
<dbReference type="GO" id="GO:0019903">
    <property type="term" value="F:protein phosphatase binding"/>
    <property type="evidence" value="ECO:0000314"/>
    <property type="project" value="HGNC-UCL"/>
</dbReference>
<dbReference type="GO" id="GO:0004864">
    <property type="term" value="F:protein phosphatase inhibitor activity"/>
    <property type="evidence" value="ECO:0000314"/>
    <property type="project" value="HGNC-UCL"/>
</dbReference>
<dbReference type="GO" id="GO:0000086">
    <property type="term" value="P:G2/M transition of mitotic cell cycle"/>
    <property type="evidence" value="ECO:0000304"/>
    <property type="project" value="Reactome"/>
</dbReference>
<dbReference type="Gene3D" id="3.40.50.1820">
    <property type="entry name" value="alpha/beta hydrolase"/>
    <property type="match status" value="1"/>
</dbReference>
<dbReference type="InterPro" id="IPR000073">
    <property type="entry name" value="AB_hydrolase_1"/>
</dbReference>
<dbReference type="InterPro" id="IPR029058">
    <property type="entry name" value="AB_hydrolase_fold"/>
</dbReference>
<dbReference type="InterPro" id="IPR016812">
    <property type="entry name" value="PPase_methylesterase_euk"/>
</dbReference>
<dbReference type="PANTHER" id="PTHR14189:SF0">
    <property type="entry name" value="PROTEIN PHOSPHATASE METHYLESTERASE 1"/>
    <property type="match status" value="1"/>
</dbReference>
<dbReference type="PANTHER" id="PTHR14189">
    <property type="entry name" value="PROTEIN PHOSPHATASE METHYLESTERASE-1 RELATED"/>
    <property type="match status" value="1"/>
</dbReference>
<dbReference type="Pfam" id="PF12697">
    <property type="entry name" value="Abhydrolase_6"/>
    <property type="match status" value="1"/>
</dbReference>
<dbReference type="PIRSF" id="PIRSF022950">
    <property type="entry name" value="PPase_methylesterase_euk"/>
    <property type="match status" value="1"/>
</dbReference>
<dbReference type="SUPFAM" id="SSF53474">
    <property type="entry name" value="alpha/beta-Hydrolases"/>
    <property type="match status" value="1"/>
</dbReference>
<dbReference type="PROSITE" id="PS00120">
    <property type="entry name" value="LIPASE_SER"/>
    <property type="match status" value="1"/>
</dbReference>
<name>PPME1_HUMAN</name>
<proteinExistence type="evidence at protein level"/>
<feature type="initiator methionine" description="Removed" evidence="5">
    <location>
        <position position="1"/>
    </location>
</feature>
<feature type="chain" id="PRO_0000090390" description="Protein phosphatase methylesterase 1">
    <location>
        <begin position="2"/>
        <end position="386"/>
    </location>
</feature>
<feature type="region of interest" description="Disordered" evidence="3">
    <location>
        <begin position="1"/>
        <end position="38"/>
    </location>
</feature>
<feature type="region of interest" description="Disordered" evidence="3">
    <location>
        <begin position="254"/>
        <end position="280"/>
    </location>
</feature>
<feature type="compositionally biased region" description="Acidic residues" evidence="3">
    <location>
        <begin position="254"/>
        <end position="265"/>
    </location>
</feature>
<feature type="compositionally biased region" description="Basic and acidic residues" evidence="3">
    <location>
        <begin position="268"/>
        <end position="280"/>
    </location>
</feature>
<feature type="active site" evidence="6">
    <location>
        <position position="156"/>
    </location>
</feature>
<feature type="active site" evidence="6">
    <location>
        <position position="181"/>
    </location>
</feature>
<feature type="active site" evidence="6">
    <location>
        <position position="349"/>
    </location>
</feature>
<feature type="modified residue" description="Phosphoserine" evidence="11">
    <location>
        <position position="15"/>
    </location>
</feature>
<feature type="modified residue" description="Asymmetric dimethylarginine; alternate" evidence="2">
    <location>
        <position position="16"/>
    </location>
</feature>
<feature type="modified residue" description="Omega-N-methylarginine; alternate" evidence="12">
    <location>
        <position position="16"/>
    </location>
</feature>
<feature type="modified residue" description="Phosphoserine" evidence="10 13">
    <location>
        <position position="42"/>
    </location>
</feature>
<feature type="splice variant" id="VSP_010335" description="In isoform 3." evidence="7">
    <location>
        <begin position="1"/>
        <end position="276"/>
    </location>
</feature>
<feature type="splice variant" id="VSP_010336" description="In isoform 2." evidence="8">
    <location>
        <begin position="1"/>
        <end position="187"/>
    </location>
</feature>
<feature type="splice variant" id="VSP_054818" description="In isoform 4." evidence="9">
    <original>E</original>
    <variation>EGLPSETQNLLLFLQ</variation>
    <location>
        <position position="278"/>
    </location>
</feature>
<feature type="splice variant" id="VSP_010337" description="In isoform 3." evidence="7">
    <original>AEAVATFLIRHRFAEPIGGFQCVFPGC</original>
    <variation>SLVLSDCKRTTVRITLDVTEDKSLSLSLHCLQQLLWSLCRCSSTSSPTSPWQLLMVLVLCICAEELLTLCYFIPGPCG</variation>
    <location>
        <begin position="360"/>
        <end position="386"/>
    </location>
</feature>
<feature type="sequence conflict" description="In Ref. 3; BAA91661." evidence="9" ref="3">
    <original>F</original>
    <variation>S</variation>
    <location>
        <position position="309"/>
    </location>
</feature>
<feature type="helix" evidence="14">
    <location>
        <begin position="46"/>
        <end position="48"/>
    </location>
</feature>
<feature type="strand" evidence="14">
    <location>
        <begin position="51"/>
        <end position="60"/>
    </location>
</feature>
<feature type="strand" evidence="14">
    <location>
        <begin position="63"/>
        <end position="72"/>
    </location>
</feature>
<feature type="strand" evidence="14">
    <location>
        <begin position="74"/>
        <end position="76"/>
    </location>
</feature>
<feature type="strand" evidence="14">
    <location>
        <begin position="78"/>
        <end position="82"/>
    </location>
</feature>
<feature type="helix" evidence="14">
    <location>
        <begin position="89"/>
        <end position="92"/>
    </location>
</feature>
<feature type="helix" evidence="14">
    <location>
        <begin position="93"/>
        <end position="100"/>
    </location>
</feature>
<feature type="strand" evidence="14">
    <location>
        <begin position="106"/>
        <end position="110"/>
    </location>
</feature>
<feature type="helix" evidence="14">
    <location>
        <begin position="128"/>
        <end position="143"/>
    </location>
</feature>
<feature type="strand" evidence="15">
    <location>
        <begin position="144"/>
        <end position="146"/>
    </location>
</feature>
<feature type="strand" evidence="14">
    <location>
        <begin position="150"/>
        <end position="155"/>
    </location>
</feature>
<feature type="helix" evidence="14">
    <location>
        <begin position="157"/>
        <end position="167"/>
    </location>
</feature>
<feature type="strand" evidence="14">
    <location>
        <begin position="174"/>
        <end position="181"/>
    </location>
</feature>
<feature type="helix" evidence="14">
    <location>
        <begin position="184"/>
        <end position="200"/>
    </location>
</feature>
<feature type="strand" evidence="14">
    <location>
        <begin position="205"/>
        <end position="207"/>
    </location>
</feature>
<feature type="helix" evidence="14">
    <location>
        <begin position="208"/>
        <end position="217"/>
    </location>
</feature>
<feature type="strand" evidence="16">
    <location>
        <begin position="220"/>
        <end position="222"/>
    </location>
</feature>
<feature type="helix" evidence="14">
    <location>
        <begin position="224"/>
        <end position="234"/>
    </location>
</feature>
<feature type="strand" evidence="14">
    <location>
        <begin position="235"/>
        <end position="237"/>
    </location>
</feature>
<feature type="strand" evidence="14">
    <location>
        <begin position="285"/>
        <end position="288"/>
    </location>
</feature>
<feature type="helix" evidence="14">
    <location>
        <begin position="291"/>
        <end position="294"/>
    </location>
</feature>
<feature type="helix" evidence="14">
    <location>
        <begin position="295"/>
        <end position="302"/>
    </location>
</feature>
<feature type="helix" evidence="14">
    <location>
        <begin position="305"/>
        <end position="311"/>
    </location>
</feature>
<feature type="strand" evidence="14">
    <location>
        <begin position="312"/>
        <end position="314"/>
    </location>
</feature>
<feature type="strand" evidence="14">
    <location>
        <begin position="316"/>
        <end position="322"/>
    </location>
</feature>
<feature type="helix" evidence="15">
    <location>
        <begin position="323"/>
        <end position="325"/>
    </location>
</feature>
<feature type="helix" evidence="14">
    <location>
        <begin position="328"/>
        <end position="335"/>
    </location>
</feature>
<feature type="strand" evidence="14">
    <location>
        <begin position="339"/>
        <end position="343"/>
    </location>
</feature>
<feature type="helix" evidence="14">
    <location>
        <begin position="351"/>
        <end position="354"/>
    </location>
</feature>
<feature type="helix" evidence="14">
    <location>
        <begin position="356"/>
        <end position="369"/>
    </location>
</feature>
<feature type="strand" evidence="15">
    <location>
        <begin position="372"/>
        <end position="375"/>
    </location>
</feature>